<reference key="1">
    <citation type="journal article" date="2007" name="J. Bacteriol.">
        <title>The complete genome sequence of Campylobacter jejuni strain 81116 (NCTC11828).</title>
        <authorList>
            <person name="Pearson B.M."/>
            <person name="Gaskin D.J.H."/>
            <person name="Segers R.P.A.M."/>
            <person name="Wells J.M."/>
            <person name="Nuijten P.J.M."/>
            <person name="van Vliet A.H.M."/>
        </authorList>
    </citation>
    <scope>NUCLEOTIDE SEQUENCE [LARGE SCALE GENOMIC DNA]</scope>
    <source>
        <strain>81116 / NCTC 11828</strain>
    </source>
</reference>
<sequence>MLILASSSISRANLLKTAKIDFRQVSFDYDENLDKNISPFLYVQKIVLEKERQFLSTLGKDFQNQNLLFADSIVCIDEKILTKAKDKKEAYEMLALQNGKYASILSAFLLVKPEKRVFSLSKTTLYFKNFDENALRDYVENDLYKGKAGCIMCEGFHQNFITHQVGNLSTALGLDIQTLKAYL</sequence>
<feature type="chain" id="PRO_1000072496" description="Nucleoside triphosphate pyrophosphatase">
    <location>
        <begin position="1"/>
        <end position="183"/>
    </location>
</feature>
<feature type="active site" description="Proton acceptor" evidence="1">
    <location>
        <position position="71"/>
    </location>
</feature>
<accession>A8FKT3</accession>
<keyword id="KW-0963">Cytoplasm</keyword>
<keyword id="KW-0378">Hydrolase</keyword>
<keyword id="KW-0546">Nucleotide metabolism</keyword>
<gene>
    <name type="ordered locus">C8J_0471</name>
</gene>
<dbReference type="EC" id="3.6.1.9" evidence="1"/>
<dbReference type="EMBL" id="CP000814">
    <property type="protein sequence ID" value="ABV52070.1"/>
    <property type="molecule type" value="Genomic_DNA"/>
</dbReference>
<dbReference type="SMR" id="A8FKT3"/>
<dbReference type="KEGG" id="cju:C8J_0471"/>
<dbReference type="HOGENOM" id="CLU_040416_2_2_7"/>
<dbReference type="GO" id="GO:0005737">
    <property type="term" value="C:cytoplasm"/>
    <property type="evidence" value="ECO:0007669"/>
    <property type="project" value="UniProtKB-SubCell"/>
</dbReference>
<dbReference type="GO" id="GO:0047429">
    <property type="term" value="F:nucleoside triphosphate diphosphatase activity"/>
    <property type="evidence" value="ECO:0007669"/>
    <property type="project" value="UniProtKB-EC"/>
</dbReference>
<dbReference type="GO" id="GO:0009117">
    <property type="term" value="P:nucleotide metabolic process"/>
    <property type="evidence" value="ECO:0007669"/>
    <property type="project" value="UniProtKB-KW"/>
</dbReference>
<dbReference type="CDD" id="cd00555">
    <property type="entry name" value="Maf"/>
    <property type="match status" value="1"/>
</dbReference>
<dbReference type="Gene3D" id="3.90.950.10">
    <property type="match status" value="1"/>
</dbReference>
<dbReference type="HAMAP" id="MF_00528">
    <property type="entry name" value="Maf"/>
    <property type="match status" value="1"/>
</dbReference>
<dbReference type="InterPro" id="IPR029001">
    <property type="entry name" value="ITPase-like_fam"/>
</dbReference>
<dbReference type="InterPro" id="IPR003697">
    <property type="entry name" value="Maf-like"/>
</dbReference>
<dbReference type="NCBIfam" id="TIGR00172">
    <property type="entry name" value="maf"/>
    <property type="match status" value="1"/>
</dbReference>
<dbReference type="NCBIfam" id="NF003141">
    <property type="entry name" value="PRK04056.1"/>
    <property type="match status" value="1"/>
</dbReference>
<dbReference type="PANTHER" id="PTHR43213">
    <property type="entry name" value="BIFUNCTIONAL DTTP/UTP PYROPHOSPHATASE/METHYLTRANSFERASE PROTEIN-RELATED"/>
    <property type="match status" value="1"/>
</dbReference>
<dbReference type="PANTHER" id="PTHR43213:SF5">
    <property type="entry name" value="BIFUNCTIONAL DTTP_UTP PYROPHOSPHATASE_METHYLTRANSFERASE PROTEIN-RELATED"/>
    <property type="match status" value="1"/>
</dbReference>
<dbReference type="Pfam" id="PF02545">
    <property type="entry name" value="Maf"/>
    <property type="match status" value="1"/>
</dbReference>
<dbReference type="PIRSF" id="PIRSF006305">
    <property type="entry name" value="Maf"/>
    <property type="match status" value="1"/>
</dbReference>
<dbReference type="SUPFAM" id="SSF52972">
    <property type="entry name" value="ITPase-like"/>
    <property type="match status" value="1"/>
</dbReference>
<organism>
    <name type="scientific">Campylobacter jejuni subsp. jejuni serotype O:6 (strain 81116 / NCTC 11828)</name>
    <dbReference type="NCBI Taxonomy" id="407148"/>
    <lineage>
        <taxon>Bacteria</taxon>
        <taxon>Pseudomonadati</taxon>
        <taxon>Campylobacterota</taxon>
        <taxon>Epsilonproteobacteria</taxon>
        <taxon>Campylobacterales</taxon>
        <taxon>Campylobacteraceae</taxon>
        <taxon>Campylobacter</taxon>
    </lineage>
</organism>
<comment type="function">
    <text evidence="1">Nucleoside triphosphate pyrophosphatase. May have a dual role in cell division arrest and in preventing the incorporation of modified nucleotides into cellular nucleic acids.</text>
</comment>
<comment type="catalytic activity">
    <reaction evidence="1">
        <text>a ribonucleoside 5'-triphosphate + H2O = a ribonucleoside 5'-phosphate + diphosphate + H(+)</text>
        <dbReference type="Rhea" id="RHEA:23996"/>
        <dbReference type="ChEBI" id="CHEBI:15377"/>
        <dbReference type="ChEBI" id="CHEBI:15378"/>
        <dbReference type="ChEBI" id="CHEBI:33019"/>
        <dbReference type="ChEBI" id="CHEBI:58043"/>
        <dbReference type="ChEBI" id="CHEBI:61557"/>
        <dbReference type="EC" id="3.6.1.9"/>
    </reaction>
</comment>
<comment type="catalytic activity">
    <reaction evidence="1">
        <text>a 2'-deoxyribonucleoside 5'-triphosphate + H2O = a 2'-deoxyribonucleoside 5'-phosphate + diphosphate + H(+)</text>
        <dbReference type="Rhea" id="RHEA:44644"/>
        <dbReference type="ChEBI" id="CHEBI:15377"/>
        <dbReference type="ChEBI" id="CHEBI:15378"/>
        <dbReference type="ChEBI" id="CHEBI:33019"/>
        <dbReference type="ChEBI" id="CHEBI:61560"/>
        <dbReference type="ChEBI" id="CHEBI:65317"/>
        <dbReference type="EC" id="3.6.1.9"/>
    </reaction>
</comment>
<comment type="cofactor">
    <cofactor evidence="1">
        <name>a divalent metal cation</name>
        <dbReference type="ChEBI" id="CHEBI:60240"/>
    </cofactor>
</comment>
<comment type="subcellular location">
    <subcellularLocation>
        <location evidence="1">Cytoplasm</location>
    </subcellularLocation>
</comment>
<comment type="similarity">
    <text evidence="1">Belongs to the Maf family.</text>
</comment>
<protein>
    <recommendedName>
        <fullName evidence="1">Nucleoside triphosphate pyrophosphatase</fullName>
        <ecNumber evidence="1">3.6.1.9</ecNumber>
    </recommendedName>
    <alternativeName>
        <fullName evidence="1">Nucleotide pyrophosphatase</fullName>
        <shortName evidence="1">Nucleotide PPase</shortName>
    </alternativeName>
</protein>
<proteinExistence type="inferred from homology"/>
<name>NTPP_CAMJ8</name>
<evidence type="ECO:0000255" key="1">
    <source>
        <dbReference type="HAMAP-Rule" id="MF_00528"/>
    </source>
</evidence>